<proteinExistence type="inferred from homology"/>
<comment type="function">
    <text evidence="1">Produces ATP from ADP in the presence of a proton gradient across the membrane. The V-type beta chain is a regulatory subunit.</text>
</comment>
<comment type="similarity">
    <text evidence="1">Belongs to the ATPase alpha/beta chains family.</text>
</comment>
<gene>
    <name evidence="1" type="primary">atpB</name>
    <name type="ordered locus">CPR_1608</name>
</gene>
<feature type="chain" id="PRO_0000322493" description="V-type ATP synthase beta chain">
    <location>
        <begin position="1"/>
        <end position="460"/>
    </location>
</feature>
<dbReference type="EMBL" id="CP000312">
    <property type="protein sequence ID" value="ABG85757.1"/>
    <property type="molecule type" value="Genomic_DNA"/>
</dbReference>
<dbReference type="RefSeq" id="WP_003449785.1">
    <property type="nucleotide sequence ID" value="NZ_CAXVKH010000015.1"/>
</dbReference>
<dbReference type="SMR" id="Q0SSI3"/>
<dbReference type="KEGG" id="cpr:CPR_1608"/>
<dbReference type="Proteomes" id="UP000001824">
    <property type="component" value="Chromosome"/>
</dbReference>
<dbReference type="GO" id="GO:0005524">
    <property type="term" value="F:ATP binding"/>
    <property type="evidence" value="ECO:0007669"/>
    <property type="project" value="UniProtKB-UniRule"/>
</dbReference>
<dbReference type="GO" id="GO:0046933">
    <property type="term" value="F:proton-transporting ATP synthase activity, rotational mechanism"/>
    <property type="evidence" value="ECO:0007669"/>
    <property type="project" value="UniProtKB-UniRule"/>
</dbReference>
<dbReference type="GO" id="GO:0042777">
    <property type="term" value="P:proton motive force-driven plasma membrane ATP synthesis"/>
    <property type="evidence" value="ECO:0007669"/>
    <property type="project" value="UniProtKB-UniRule"/>
</dbReference>
<dbReference type="CDD" id="cd18112">
    <property type="entry name" value="ATP-synt_V_A-type_beta_C"/>
    <property type="match status" value="1"/>
</dbReference>
<dbReference type="CDD" id="cd18118">
    <property type="entry name" value="ATP-synt_V_A-type_beta_N"/>
    <property type="match status" value="1"/>
</dbReference>
<dbReference type="CDD" id="cd01135">
    <property type="entry name" value="V_A-ATPase_B"/>
    <property type="match status" value="1"/>
</dbReference>
<dbReference type="Gene3D" id="3.40.50.12240">
    <property type="match status" value="1"/>
</dbReference>
<dbReference type="HAMAP" id="MF_00310">
    <property type="entry name" value="ATP_synth_B_arch"/>
    <property type="match status" value="1"/>
</dbReference>
<dbReference type="InterPro" id="IPR055190">
    <property type="entry name" value="ATP-synt_VA_C"/>
</dbReference>
<dbReference type="InterPro" id="IPR020003">
    <property type="entry name" value="ATPase_a/bsu_AS"/>
</dbReference>
<dbReference type="InterPro" id="IPR004100">
    <property type="entry name" value="ATPase_F1/V1/A1_a/bsu_N"/>
</dbReference>
<dbReference type="InterPro" id="IPR000194">
    <property type="entry name" value="ATPase_F1/V1/A1_a/bsu_nucl-bd"/>
</dbReference>
<dbReference type="InterPro" id="IPR027417">
    <property type="entry name" value="P-loop_NTPase"/>
</dbReference>
<dbReference type="InterPro" id="IPR022879">
    <property type="entry name" value="V-ATPase_su_B/beta"/>
</dbReference>
<dbReference type="NCBIfam" id="NF003235">
    <property type="entry name" value="PRK04196.1"/>
    <property type="match status" value="1"/>
</dbReference>
<dbReference type="PANTHER" id="PTHR43389">
    <property type="entry name" value="V-TYPE PROTON ATPASE SUBUNIT B"/>
    <property type="match status" value="1"/>
</dbReference>
<dbReference type="PANTHER" id="PTHR43389:SF4">
    <property type="entry name" value="V-TYPE PROTON ATPASE SUBUNIT B"/>
    <property type="match status" value="1"/>
</dbReference>
<dbReference type="Pfam" id="PF00006">
    <property type="entry name" value="ATP-synt_ab"/>
    <property type="match status" value="1"/>
</dbReference>
<dbReference type="Pfam" id="PF02874">
    <property type="entry name" value="ATP-synt_ab_N"/>
    <property type="match status" value="1"/>
</dbReference>
<dbReference type="Pfam" id="PF22919">
    <property type="entry name" value="ATP-synt_VA_C"/>
    <property type="match status" value="1"/>
</dbReference>
<dbReference type="PIRSF" id="PIRSF039114">
    <property type="entry name" value="V-ATPsynth_beta/V-ATPase_B"/>
    <property type="match status" value="1"/>
</dbReference>
<dbReference type="SUPFAM" id="SSF47917">
    <property type="entry name" value="C-terminal domain of alpha and beta subunits of F1 ATP synthase"/>
    <property type="match status" value="1"/>
</dbReference>
<dbReference type="SUPFAM" id="SSF52540">
    <property type="entry name" value="P-loop containing nucleoside triphosphate hydrolases"/>
    <property type="match status" value="1"/>
</dbReference>
<dbReference type="PROSITE" id="PS00152">
    <property type="entry name" value="ATPASE_ALPHA_BETA"/>
    <property type="match status" value="1"/>
</dbReference>
<name>VATB_CLOPS</name>
<accession>Q0SSI3</accession>
<reference key="1">
    <citation type="journal article" date="2006" name="Genome Res.">
        <title>Skewed genomic variability in strains of the toxigenic bacterial pathogen, Clostridium perfringens.</title>
        <authorList>
            <person name="Myers G.S.A."/>
            <person name="Rasko D.A."/>
            <person name="Cheung J.K."/>
            <person name="Ravel J."/>
            <person name="Seshadri R."/>
            <person name="DeBoy R.T."/>
            <person name="Ren Q."/>
            <person name="Varga J."/>
            <person name="Awad M.M."/>
            <person name="Brinkac L.M."/>
            <person name="Daugherty S.C."/>
            <person name="Haft D.H."/>
            <person name="Dodson R.J."/>
            <person name="Madupu R."/>
            <person name="Nelson W.C."/>
            <person name="Rosovitz M.J."/>
            <person name="Sullivan S.A."/>
            <person name="Khouri H."/>
            <person name="Dimitrov G.I."/>
            <person name="Watkins K.L."/>
            <person name="Mulligan S."/>
            <person name="Benton J."/>
            <person name="Radune D."/>
            <person name="Fisher D.J."/>
            <person name="Atkins H.S."/>
            <person name="Hiscox T."/>
            <person name="Jost B.H."/>
            <person name="Billington S.J."/>
            <person name="Songer J.G."/>
            <person name="McClane B.A."/>
            <person name="Titball R.W."/>
            <person name="Rood J.I."/>
            <person name="Melville S.B."/>
            <person name="Paulsen I.T."/>
        </authorList>
    </citation>
    <scope>NUCLEOTIDE SEQUENCE [LARGE SCALE GENOMIC DNA]</scope>
    <source>
        <strain>SM101 / Type A</strain>
    </source>
</reference>
<sequence>MLKEYRTVTEVVGPLMAVEGVEGVKYDELVEIEMQTGELRRGKVLEVNGDKAMVQLFEGSAGINLKNTKVRFLGRPLEIGVSEDMLGRVFDGMGRPKDNGPNIIPEKRLDINGEAINPVARNYPSEFIQTGISAIDGLNTLVRGQKLPVFSGSGLPHKELAAQIARQAKVLNSDSKFAVVFAAIGITFEEAEFFVDEFTKTGAIDRSVLFMNLASDPAIERIATPRMALTTAEYLAYEKGMHVLVIMTDITNYCEALREVSAARKEVPGRRGYPGYLYTDLSTLYERAGRLVGKEGSITQIPILTMPEDDKTHPIPDLTGYITEGQIILSRELYKKGIMPPIDVLPSLSRLKDKGIGKGKTREDHADTMNQLFSAYAQGKQAKELAAILGESALSDVDKAYAKFAEAFENEYVSQGFTTNRTIEETLNLGWKLLKILPRTELKRIRDEYLEKYMPVGEDE</sequence>
<protein>
    <recommendedName>
        <fullName evidence="1">V-type ATP synthase beta chain</fullName>
    </recommendedName>
    <alternativeName>
        <fullName evidence="1">V-ATPase subunit B</fullName>
    </alternativeName>
</protein>
<evidence type="ECO:0000255" key="1">
    <source>
        <dbReference type="HAMAP-Rule" id="MF_00310"/>
    </source>
</evidence>
<keyword id="KW-0066">ATP synthesis</keyword>
<keyword id="KW-0375">Hydrogen ion transport</keyword>
<keyword id="KW-0406">Ion transport</keyword>
<keyword id="KW-0813">Transport</keyword>
<organism>
    <name type="scientific">Clostridium perfringens (strain SM101 / Type A)</name>
    <dbReference type="NCBI Taxonomy" id="289380"/>
    <lineage>
        <taxon>Bacteria</taxon>
        <taxon>Bacillati</taxon>
        <taxon>Bacillota</taxon>
        <taxon>Clostridia</taxon>
        <taxon>Eubacteriales</taxon>
        <taxon>Clostridiaceae</taxon>
        <taxon>Clostridium</taxon>
    </lineage>
</organism>